<gene>
    <name evidence="1" type="primary">rpl35</name>
</gene>
<dbReference type="EMBL" id="AP006715">
    <property type="protein sequence ID" value="BAE92395.1"/>
    <property type="molecule type" value="Genomic_DNA"/>
</dbReference>
<dbReference type="RefSeq" id="YP_536952.1">
    <property type="nucleotide sequence ID" value="NC_007932.1"/>
</dbReference>
<dbReference type="SMR" id="Q1XDL6"/>
<dbReference type="GeneID" id="3978936"/>
<dbReference type="GO" id="GO:0009507">
    <property type="term" value="C:chloroplast"/>
    <property type="evidence" value="ECO:0007669"/>
    <property type="project" value="UniProtKB-SubCell"/>
</dbReference>
<dbReference type="GO" id="GO:0015934">
    <property type="term" value="C:large ribosomal subunit"/>
    <property type="evidence" value="ECO:0007669"/>
    <property type="project" value="TreeGrafter"/>
</dbReference>
<dbReference type="GO" id="GO:0003735">
    <property type="term" value="F:structural constituent of ribosome"/>
    <property type="evidence" value="ECO:0007669"/>
    <property type="project" value="InterPro"/>
</dbReference>
<dbReference type="GO" id="GO:0006412">
    <property type="term" value="P:translation"/>
    <property type="evidence" value="ECO:0007669"/>
    <property type="project" value="UniProtKB-UniRule"/>
</dbReference>
<dbReference type="FunFam" id="4.10.410.60:FF:000001">
    <property type="entry name" value="50S ribosomal protein L35"/>
    <property type="match status" value="1"/>
</dbReference>
<dbReference type="Gene3D" id="4.10.410.60">
    <property type="match status" value="1"/>
</dbReference>
<dbReference type="HAMAP" id="MF_00514">
    <property type="entry name" value="Ribosomal_bL35"/>
    <property type="match status" value="1"/>
</dbReference>
<dbReference type="InterPro" id="IPR001706">
    <property type="entry name" value="Ribosomal_bL35"/>
</dbReference>
<dbReference type="InterPro" id="IPR021137">
    <property type="entry name" value="Ribosomal_bL35-like"/>
</dbReference>
<dbReference type="InterPro" id="IPR018265">
    <property type="entry name" value="Ribosomal_bL35_CS"/>
</dbReference>
<dbReference type="InterPro" id="IPR037229">
    <property type="entry name" value="Ribosomal_bL35_sf"/>
</dbReference>
<dbReference type="NCBIfam" id="TIGR00001">
    <property type="entry name" value="rpmI_bact"/>
    <property type="match status" value="1"/>
</dbReference>
<dbReference type="PANTHER" id="PTHR33343">
    <property type="entry name" value="54S RIBOSOMAL PROTEIN BL35M"/>
    <property type="match status" value="1"/>
</dbReference>
<dbReference type="PANTHER" id="PTHR33343:SF1">
    <property type="entry name" value="LARGE RIBOSOMAL SUBUNIT PROTEIN BL35M"/>
    <property type="match status" value="1"/>
</dbReference>
<dbReference type="Pfam" id="PF01632">
    <property type="entry name" value="Ribosomal_L35p"/>
    <property type="match status" value="1"/>
</dbReference>
<dbReference type="PRINTS" id="PR00064">
    <property type="entry name" value="RIBOSOMALL35"/>
</dbReference>
<dbReference type="SUPFAM" id="SSF143034">
    <property type="entry name" value="L35p-like"/>
    <property type="match status" value="1"/>
</dbReference>
<dbReference type="PROSITE" id="PS00936">
    <property type="entry name" value="RIBOSOMAL_L35"/>
    <property type="match status" value="1"/>
</dbReference>
<sequence>MPKLKTSKAIAKRFKVSSSGKFLRHKASKSHLLQKKSSKQRRHLSSTCSVDLKDIKNIAMQLPYL</sequence>
<proteinExistence type="inferred from homology"/>
<protein>
    <recommendedName>
        <fullName evidence="1">Large ribosomal subunit protein bL35c</fullName>
    </recommendedName>
    <alternativeName>
        <fullName evidence="3">50S ribosomal protein L35, chloroplastic</fullName>
    </alternativeName>
</protein>
<comment type="subcellular location">
    <subcellularLocation>
        <location>Plastid</location>
        <location>Chloroplast</location>
    </subcellularLocation>
</comment>
<comment type="similarity">
    <text evidence="1">Belongs to the bacterial ribosomal protein bL35 family.</text>
</comment>
<evidence type="ECO:0000255" key="1">
    <source>
        <dbReference type="HAMAP-Rule" id="MF_00514"/>
    </source>
</evidence>
<evidence type="ECO:0000256" key="2">
    <source>
        <dbReference type="SAM" id="MobiDB-lite"/>
    </source>
</evidence>
<evidence type="ECO:0000305" key="3"/>
<geneLocation type="chloroplast"/>
<reference key="1">
    <citation type="submission" date="2003-11" db="EMBL/GenBank/DDBJ databases">
        <title>Whole genome sequence of Porphyra yezoensis chloroplast.</title>
        <authorList>
            <person name="Kunimoto M."/>
            <person name="Morishima K."/>
            <person name="Yoshikawa M."/>
            <person name="Fukuda S."/>
            <person name="Kobayashi T."/>
            <person name="Kobayashi M."/>
            <person name="Okazaki T."/>
            <person name="Ohara I."/>
            <person name="Nakayama I."/>
        </authorList>
    </citation>
    <scope>NUCLEOTIDE SEQUENCE [LARGE SCALE GENOMIC DNA]</scope>
    <source>
        <strain>U-51</strain>
    </source>
</reference>
<feature type="chain" id="PRO_0000258791" description="Large ribosomal subunit protein bL35c">
    <location>
        <begin position="1"/>
        <end position="65"/>
    </location>
</feature>
<feature type="region of interest" description="Disordered" evidence="2">
    <location>
        <begin position="25"/>
        <end position="45"/>
    </location>
</feature>
<feature type="compositionally biased region" description="Basic residues" evidence="2">
    <location>
        <begin position="25"/>
        <end position="44"/>
    </location>
</feature>
<accession>Q1XDL6</accession>
<name>RK35_PYRYE</name>
<keyword id="KW-0150">Chloroplast</keyword>
<keyword id="KW-0934">Plastid</keyword>
<keyword id="KW-0687">Ribonucleoprotein</keyword>
<keyword id="KW-0689">Ribosomal protein</keyword>
<organism>
    <name type="scientific">Pyropia yezoensis</name>
    <name type="common">Susabi-nori</name>
    <name type="synonym">Porphyra yezoensis</name>
    <dbReference type="NCBI Taxonomy" id="2788"/>
    <lineage>
        <taxon>Eukaryota</taxon>
        <taxon>Rhodophyta</taxon>
        <taxon>Bangiophyceae</taxon>
        <taxon>Bangiales</taxon>
        <taxon>Bangiaceae</taxon>
        <taxon>Pyropia</taxon>
    </lineage>
</organism>